<evidence type="ECO:0000250" key="1"/>
<evidence type="ECO:0000305" key="2"/>
<dbReference type="EMBL" id="BX571856">
    <property type="protein sequence ID" value="CAG40779.1"/>
    <property type="molecule type" value="Genomic_DNA"/>
</dbReference>
<dbReference type="RefSeq" id="WP_000634175.1">
    <property type="nucleotide sequence ID" value="NC_002952.2"/>
</dbReference>
<dbReference type="SMR" id="Q6GFZ7"/>
<dbReference type="KEGG" id="sar:SAR1788"/>
<dbReference type="HOGENOM" id="CLU_049301_16_0_9"/>
<dbReference type="Proteomes" id="UP000000596">
    <property type="component" value="Chromosome"/>
</dbReference>
<dbReference type="GO" id="GO:0005737">
    <property type="term" value="C:cytoplasm"/>
    <property type="evidence" value="ECO:0007669"/>
    <property type="project" value="UniProtKB-SubCell"/>
</dbReference>
<dbReference type="CDD" id="cd00293">
    <property type="entry name" value="USP-like"/>
    <property type="match status" value="1"/>
</dbReference>
<dbReference type="Gene3D" id="3.40.50.620">
    <property type="entry name" value="HUPs"/>
    <property type="match status" value="1"/>
</dbReference>
<dbReference type="InterPro" id="IPR014729">
    <property type="entry name" value="Rossmann-like_a/b/a_fold"/>
</dbReference>
<dbReference type="InterPro" id="IPR006015">
    <property type="entry name" value="Universal_stress_UspA"/>
</dbReference>
<dbReference type="InterPro" id="IPR006016">
    <property type="entry name" value="UspA"/>
</dbReference>
<dbReference type="PANTHER" id="PTHR46268">
    <property type="entry name" value="STRESS RESPONSE PROTEIN NHAX"/>
    <property type="match status" value="1"/>
</dbReference>
<dbReference type="PANTHER" id="PTHR46268:SF6">
    <property type="entry name" value="UNIVERSAL STRESS PROTEIN UP12"/>
    <property type="match status" value="1"/>
</dbReference>
<dbReference type="Pfam" id="PF00582">
    <property type="entry name" value="Usp"/>
    <property type="match status" value="1"/>
</dbReference>
<dbReference type="PIRSF" id="PIRSF006276">
    <property type="entry name" value="UspA"/>
    <property type="match status" value="1"/>
</dbReference>
<dbReference type="PRINTS" id="PR01438">
    <property type="entry name" value="UNVRSLSTRESS"/>
</dbReference>
<dbReference type="SUPFAM" id="SSF52402">
    <property type="entry name" value="Adenine nucleotide alpha hydrolases-like"/>
    <property type="match status" value="1"/>
</dbReference>
<keyword id="KW-0963">Cytoplasm</keyword>
<reference key="1">
    <citation type="journal article" date="2004" name="Proc. Natl. Acad. Sci. U.S.A.">
        <title>Complete genomes of two clinical Staphylococcus aureus strains: evidence for the rapid evolution of virulence and drug resistance.</title>
        <authorList>
            <person name="Holden M.T.G."/>
            <person name="Feil E.J."/>
            <person name="Lindsay J.A."/>
            <person name="Peacock S.J."/>
            <person name="Day N.P.J."/>
            <person name="Enright M.C."/>
            <person name="Foster T.J."/>
            <person name="Moore C.E."/>
            <person name="Hurst L."/>
            <person name="Atkin R."/>
            <person name="Barron A."/>
            <person name="Bason N."/>
            <person name="Bentley S.D."/>
            <person name="Chillingworth C."/>
            <person name="Chillingworth T."/>
            <person name="Churcher C."/>
            <person name="Clark L."/>
            <person name="Corton C."/>
            <person name="Cronin A."/>
            <person name="Doggett J."/>
            <person name="Dowd L."/>
            <person name="Feltwell T."/>
            <person name="Hance Z."/>
            <person name="Harris B."/>
            <person name="Hauser H."/>
            <person name="Holroyd S."/>
            <person name="Jagels K."/>
            <person name="James K.D."/>
            <person name="Lennard N."/>
            <person name="Line A."/>
            <person name="Mayes R."/>
            <person name="Moule S."/>
            <person name="Mungall K."/>
            <person name="Ormond D."/>
            <person name="Quail M.A."/>
            <person name="Rabbinowitsch E."/>
            <person name="Rutherford K.M."/>
            <person name="Sanders M."/>
            <person name="Sharp S."/>
            <person name="Simmonds M."/>
            <person name="Stevens K."/>
            <person name="Whitehead S."/>
            <person name="Barrell B.G."/>
            <person name="Spratt B.G."/>
            <person name="Parkhill J."/>
        </authorList>
    </citation>
    <scope>NUCLEOTIDE SEQUENCE [LARGE SCALE GENOMIC DNA]</scope>
    <source>
        <strain>MRSA252</strain>
    </source>
</reference>
<protein>
    <recommendedName>
        <fullName>Putative universal stress protein SAR1788</fullName>
    </recommendedName>
</protein>
<sequence length="166" mass="18475">MITYKNILIAVDGSHEAEWAFNRAVGVAKRNDAKLTIVNVIDSRTYSSYEVYDAQFTEKSKHFAEELLNGYKEVATNAGVKDVETRLEFGSPKSIIPKKLAHEINADLIMSGTSGLNAVERFIVGSVSESIVRHAPCDVLVVRTEELPADFQPQVATTQLREKYQN</sequence>
<accession>Q6GFZ7</accession>
<feature type="chain" id="PRO_0000288891" description="Putative universal stress protein SAR1788">
    <location>
        <begin position="1"/>
        <end position="166"/>
    </location>
</feature>
<name>Y1788_STAAR</name>
<proteinExistence type="inferred from homology"/>
<organism>
    <name type="scientific">Staphylococcus aureus (strain MRSA252)</name>
    <dbReference type="NCBI Taxonomy" id="282458"/>
    <lineage>
        <taxon>Bacteria</taxon>
        <taxon>Bacillati</taxon>
        <taxon>Bacillota</taxon>
        <taxon>Bacilli</taxon>
        <taxon>Bacillales</taxon>
        <taxon>Staphylococcaceae</taxon>
        <taxon>Staphylococcus</taxon>
    </lineage>
</organism>
<gene>
    <name type="ordered locus">SAR1788</name>
</gene>
<comment type="subcellular location">
    <subcellularLocation>
        <location evidence="1">Cytoplasm</location>
    </subcellularLocation>
</comment>
<comment type="similarity">
    <text evidence="2">Belongs to the universal stress protein A family.</text>
</comment>